<accession>B2TIK5</accession>
<gene>
    <name evidence="1" type="primary">rplQ</name>
    <name type="ordered locus">CLL_A0268</name>
</gene>
<proteinExistence type="inferred from homology"/>
<reference key="1">
    <citation type="submission" date="2008-04" db="EMBL/GenBank/DDBJ databases">
        <title>Complete sequence of Clostridium botulinum strain Eklund.</title>
        <authorList>
            <person name="Brinkac L.M."/>
            <person name="Brown J.L."/>
            <person name="Bruce D."/>
            <person name="Detter C."/>
            <person name="Munk C."/>
            <person name="Smith L.A."/>
            <person name="Smith T.J."/>
            <person name="Sutton G."/>
            <person name="Brettin T.S."/>
        </authorList>
    </citation>
    <scope>NUCLEOTIDE SEQUENCE [LARGE SCALE GENOMIC DNA]</scope>
    <source>
        <strain>Eklund 17B / Type B</strain>
    </source>
</reference>
<evidence type="ECO:0000255" key="1">
    <source>
        <dbReference type="HAMAP-Rule" id="MF_01368"/>
    </source>
</evidence>
<evidence type="ECO:0000305" key="2"/>
<comment type="subunit">
    <text evidence="1">Part of the 50S ribosomal subunit. Contacts protein L32.</text>
</comment>
<comment type="similarity">
    <text evidence="1">Belongs to the bacterial ribosomal protein bL17 family.</text>
</comment>
<organism>
    <name type="scientific">Clostridium botulinum (strain Eklund 17B / Type B)</name>
    <dbReference type="NCBI Taxonomy" id="935198"/>
    <lineage>
        <taxon>Bacteria</taxon>
        <taxon>Bacillati</taxon>
        <taxon>Bacillota</taxon>
        <taxon>Clostridia</taxon>
        <taxon>Eubacteriales</taxon>
        <taxon>Clostridiaceae</taxon>
        <taxon>Clostridium</taxon>
    </lineage>
</organism>
<feature type="chain" id="PRO_1000144401" description="Large ribosomal subunit protein bL17">
    <location>
        <begin position="1"/>
        <end position="113"/>
    </location>
</feature>
<dbReference type="EMBL" id="CP001056">
    <property type="protein sequence ID" value="ACD22396.1"/>
    <property type="molecule type" value="Genomic_DNA"/>
</dbReference>
<dbReference type="SMR" id="B2TIK5"/>
<dbReference type="KEGG" id="cbk:CLL_A0268"/>
<dbReference type="PATRIC" id="fig|935198.13.peg.243"/>
<dbReference type="HOGENOM" id="CLU_074407_2_2_9"/>
<dbReference type="Proteomes" id="UP000001195">
    <property type="component" value="Chromosome"/>
</dbReference>
<dbReference type="GO" id="GO:0022625">
    <property type="term" value="C:cytosolic large ribosomal subunit"/>
    <property type="evidence" value="ECO:0007669"/>
    <property type="project" value="TreeGrafter"/>
</dbReference>
<dbReference type="GO" id="GO:0003735">
    <property type="term" value="F:structural constituent of ribosome"/>
    <property type="evidence" value="ECO:0007669"/>
    <property type="project" value="InterPro"/>
</dbReference>
<dbReference type="GO" id="GO:0006412">
    <property type="term" value="P:translation"/>
    <property type="evidence" value="ECO:0007669"/>
    <property type="project" value="UniProtKB-UniRule"/>
</dbReference>
<dbReference type="Gene3D" id="3.90.1030.10">
    <property type="entry name" value="Ribosomal protein L17"/>
    <property type="match status" value="1"/>
</dbReference>
<dbReference type="HAMAP" id="MF_01368">
    <property type="entry name" value="Ribosomal_bL17"/>
    <property type="match status" value="1"/>
</dbReference>
<dbReference type="InterPro" id="IPR000456">
    <property type="entry name" value="Ribosomal_bL17"/>
</dbReference>
<dbReference type="InterPro" id="IPR047859">
    <property type="entry name" value="Ribosomal_bL17_CS"/>
</dbReference>
<dbReference type="InterPro" id="IPR036373">
    <property type="entry name" value="Ribosomal_bL17_sf"/>
</dbReference>
<dbReference type="NCBIfam" id="TIGR00059">
    <property type="entry name" value="L17"/>
    <property type="match status" value="1"/>
</dbReference>
<dbReference type="PANTHER" id="PTHR14413:SF16">
    <property type="entry name" value="LARGE RIBOSOMAL SUBUNIT PROTEIN BL17M"/>
    <property type="match status" value="1"/>
</dbReference>
<dbReference type="PANTHER" id="PTHR14413">
    <property type="entry name" value="RIBOSOMAL PROTEIN L17"/>
    <property type="match status" value="1"/>
</dbReference>
<dbReference type="Pfam" id="PF01196">
    <property type="entry name" value="Ribosomal_L17"/>
    <property type="match status" value="1"/>
</dbReference>
<dbReference type="SUPFAM" id="SSF64263">
    <property type="entry name" value="Prokaryotic ribosomal protein L17"/>
    <property type="match status" value="1"/>
</dbReference>
<dbReference type="PROSITE" id="PS01167">
    <property type="entry name" value="RIBOSOMAL_L17"/>
    <property type="match status" value="1"/>
</dbReference>
<sequence>MAGYRKLGLPTDQRRAMLRNLVTSLLKHGKIETTVTRAKETRSIAEKMITLGKRGDLHARRQALAFIQEELVVKNLFDNVAPKYAERNGGYTRMYKKGPRRGDGAEVVILELV</sequence>
<name>RL17_CLOBB</name>
<protein>
    <recommendedName>
        <fullName evidence="1">Large ribosomal subunit protein bL17</fullName>
    </recommendedName>
    <alternativeName>
        <fullName evidence="2">50S ribosomal protein L17</fullName>
    </alternativeName>
</protein>
<keyword id="KW-0687">Ribonucleoprotein</keyword>
<keyword id="KW-0689">Ribosomal protein</keyword>